<gene>
    <name evidence="5" type="primary">Hlcs</name>
</gene>
<comment type="function">
    <text evidence="1">Biotin--protein ligase catalyzing the biotinylation of the 4 biotin-dependent carboxylases acetyl-CoA-carboxylase, pyruvate carboxylase, propionyl-CoA carboxylase, and methylcrotonyl-CoA carboxylase.</text>
</comment>
<comment type="catalytic activity">
    <reaction evidence="1">
        <text>apo-[methylmalonyl-CoA:pyruvate carboxytransferase] + biotin + ATP = holo-[methylmalonyl-CoA:pyruvate carboxytransferase] + AMP + diphosphate + H(+)</text>
        <dbReference type="Rhea" id="RHEA:23668"/>
        <dbReference type="Rhea" id="RHEA-COMP:10508"/>
        <dbReference type="Rhea" id="RHEA-COMP:10509"/>
        <dbReference type="ChEBI" id="CHEBI:15378"/>
        <dbReference type="ChEBI" id="CHEBI:29969"/>
        <dbReference type="ChEBI" id="CHEBI:30616"/>
        <dbReference type="ChEBI" id="CHEBI:33019"/>
        <dbReference type="ChEBI" id="CHEBI:57586"/>
        <dbReference type="ChEBI" id="CHEBI:83144"/>
        <dbReference type="ChEBI" id="CHEBI:456215"/>
        <dbReference type="EC" id="6.3.4.9"/>
    </reaction>
    <physiologicalReaction direction="left-to-right" evidence="1">
        <dbReference type="Rhea" id="RHEA:23669"/>
    </physiologicalReaction>
</comment>
<comment type="catalytic activity">
    <reaction evidence="1">
        <text>apo-[propionyl-CoA:carbon-dioxide ligase (ADP-forming)] + biotin + ATP = holo-[propionyl-CoA:carbon-dioxide ligase (ADP-forming)] + AMP + diphosphate + H(+)</text>
        <dbReference type="Rhea" id="RHEA:11204"/>
        <dbReference type="Rhea" id="RHEA-COMP:10511"/>
        <dbReference type="Rhea" id="RHEA-COMP:10512"/>
        <dbReference type="ChEBI" id="CHEBI:15378"/>
        <dbReference type="ChEBI" id="CHEBI:29969"/>
        <dbReference type="ChEBI" id="CHEBI:30616"/>
        <dbReference type="ChEBI" id="CHEBI:33019"/>
        <dbReference type="ChEBI" id="CHEBI:57586"/>
        <dbReference type="ChEBI" id="CHEBI:83144"/>
        <dbReference type="ChEBI" id="CHEBI:456215"/>
        <dbReference type="EC" id="6.3.4.10"/>
    </reaction>
    <physiologicalReaction direction="left-to-right" evidence="1">
        <dbReference type="Rhea" id="RHEA:11205"/>
    </physiologicalReaction>
</comment>
<comment type="catalytic activity">
    <reaction evidence="1">
        <text>apo-[3-methylcrotonoyl-CoA:carbon-dioxide ligase (ADP-forming)] + biotin + ATP = holo-[3-methylcrotonoyl-CoA:carbon-dioxide ligase (ADP-forming)] + AMP + diphosphate + H(+)</text>
        <dbReference type="Rhea" id="RHEA:24376"/>
        <dbReference type="Rhea" id="RHEA-COMP:10514"/>
        <dbReference type="Rhea" id="RHEA-COMP:10515"/>
        <dbReference type="ChEBI" id="CHEBI:15378"/>
        <dbReference type="ChEBI" id="CHEBI:29969"/>
        <dbReference type="ChEBI" id="CHEBI:30616"/>
        <dbReference type="ChEBI" id="CHEBI:33019"/>
        <dbReference type="ChEBI" id="CHEBI:57586"/>
        <dbReference type="ChEBI" id="CHEBI:83144"/>
        <dbReference type="ChEBI" id="CHEBI:456215"/>
        <dbReference type="EC" id="6.3.4.11"/>
    </reaction>
    <physiologicalReaction direction="left-to-right" evidence="1">
        <dbReference type="Rhea" id="RHEA:24377"/>
    </physiologicalReaction>
</comment>
<comment type="catalytic activity">
    <reaction evidence="1">
        <text>biotin + L-lysyl-[protein] + ATP = N(6)-biotinyl-L-lysyl-[protein] + AMP + diphosphate + H(+)</text>
        <dbReference type="Rhea" id="RHEA:11756"/>
        <dbReference type="Rhea" id="RHEA-COMP:9752"/>
        <dbReference type="Rhea" id="RHEA-COMP:10505"/>
        <dbReference type="ChEBI" id="CHEBI:15378"/>
        <dbReference type="ChEBI" id="CHEBI:29969"/>
        <dbReference type="ChEBI" id="CHEBI:30616"/>
        <dbReference type="ChEBI" id="CHEBI:33019"/>
        <dbReference type="ChEBI" id="CHEBI:57586"/>
        <dbReference type="ChEBI" id="CHEBI:83144"/>
        <dbReference type="ChEBI" id="CHEBI:456215"/>
        <dbReference type="EC" id="6.3.4.15"/>
    </reaction>
    <physiologicalReaction direction="left-to-right" evidence="1">
        <dbReference type="Rhea" id="RHEA:11757"/>
    </physiologicalReaction>
</comment>
<comment type="subunit">
    <text evidence="1">Monomer.</text>
</comment>
<comment type="subcellular location">
    <subcellularLocation>
        <location evidence="1">Cytoplasm</location>
    </subcellularLocation>
    <subcellularLocation>
        <location evidence="1">Mitochondrion</location>
    </subcellularLocation>
</comment>
<comment type="similarity">
    <text evidence="4">Belongs to the biotin--protein ligase family.</text>
</comment>
<evidence type="ECO:0000250" key="1">
    <source>
        <dbReference type="UniProtKB" id="P50747"/>
    </source>
</evidence>
<evidence type="ECO:0000255" key="2">
    <source>
        <dbReference type="PROSITE-ProRule" id="PRU01067"/>
    </source>
</evidence>
<evidence type="ECO:0000256" key="3">
    <source>
        <dbReference type="SAM" id="MobiDB-lite"/>
    </source>
</evidence>
<evidence type="ECO:0000305" key="4"/>
<evidence type="ECO:0000312" key="5">
    <source>
        <dbReference type="MGI" id="MGI:894646"/>
    </source>
</evidence>
<feature type="chain" id="PRO_0000064980" description="Biotin--protein ligase">
    <location>
        <begin position="1"/>
        <end position="722"/>
    </location>
</feature>
<feature type="domain" description="BPL/LPL catalytic" evidence="2">
    <location>
        <begin position="459"/>
        <end position="648"/>
    </location>
</feature>
<feature type="region of interest" description="Disordered" evidence="3">
    <location>
        <begin position="27"/>
        <end position="93"/>
    </location>
</feature>
<feature type="compositionally biased region" description="Low complexity" evidence="3">
    <location>
        <begin position="46"/>
        <end position="55"/>
    </location>
</feature>
<feature type="modified residue" description="Phosphoserine" evidence="1">
    <location>
        <position position="295"/>
    </location>
</feature>
<accession>Q920N2</accession>
<keyword id="KW-0067">ATP-binding</keyword>
<keyword id="KW-0963">Cytoplasm</keyword>
<keyword id="KW-0436">Ligase</keyword>
<keyword id="KW-0496">Mitochondrion</keyword>
<keyword id="KW-0511">Multifunctional enzyme</keyword>
<keyword id="KW-0547">Nucleotide-binding</keyword>
<keyword id="KW-0597">Phosphoprotein</keyword>
<keyword id="KW-1185">Reference proteome</keyword>
<sequence>MEDRLQMDNGLIAQKIVSVHLKDPALKELGKASDKQVQGPPPGPEASPEAQPAQGVMEHAGQGDCKAAGEGPSPRRRGCAPESEPAADGDPGLSSPELCQLHLSICHECLELENSTIDSVRSASAENIPDLPCDHSGVEGAAGELCPERKGKRVNISGKAPNILLYVGSGSEEALGRLQQVRSVLTDCVDTDSYTLYHLLEDSALRDPWSDNCLLLVIASRDPIPKDIQHKFMAYLSQGGKVLGLSSPFTLGGFRVTRRDVLRNTVQNLVFSKADGTEVRLSVLSSGYVYEEGPSLGRLQGHLENEDKDKMIVHVPFGTLGGEAVLCQVHLELPPGASLVQTADDFNVLKSSNVRRHEVLKEILTALGLSCDAPQVPALTPLYLLLAAEETQDPFMQWLGRHTDPEGIIKSSKLSLQFVSSYTSEAEITPSSMPVVTDPEAFSSEHFSLETYRQNLQTTRLGKVILFAEVTSTTMSLLDGLMFEMPQEMGLIAIAVRQTQGKGRGPNAWLSPVGCALSTLLVFIPLRSQLGQRIPFVQHLMSLAVVEAVRSIPGYEDINLRVKWPNDIYYSDLMKIGGVLVNSTLMGETFYILIGCGFNVTNSNPTICINDLIEEHNKQHGAGLKPLRADCLIARAVTVLEKLIDRFQDQGPDGVLPLYYKYWVHGGQQVRLGSTEGPQASIVGLDDSGFLQVHQEDGGVVTVHPDGNSFDMLRNLIVPKRQ</sequence>
<dbReference type="EC" id="6.3.4.-" evidence="1"/>
<dbReference type="EC" id="6.3.4.9" evidence="1"/>
<dbReference type="EC" id="6.3.4.10" evidence="1"/>
<dbReference type="EC" id="6.3.4.11" evidence="1"/>
<dbReference type="EC" id="6.3.4.15" evidence="1"/>
<dbReference type="EMBL" id="AB066227">
    <property type="protein sequence ID" value="BAB68213.1"/>
    <property type="molecule type" value="mRNA"/>
</dbReference>
<dbReference type="EMBL" id="BC050090">
    <property type="protein sequence ID" value="AAH50090.1"/>
    <property type="molecule type" value="mRNA"/>
</dbReference>
<dbReference type="CCDS" id="CCDS28346.1"/>
<dbReference type="RefSeq" id="NP_631884.1">
    <property type="nucleotide sequence ID" value="NM_139145.6"/>
</dbReference>
<dbReference type="RefSeq" id="XP_006522918.1">
    <property type="nucleotide sequence ID" value="XM_006522855.3"/>
</dbReference>
<dbReference type="RefSeq" id="XP_006522919.1">
    <property type="nucleotide sequence ID" value="XM_006522856.3"/>
</dbReference>
<dbReference type="RefSeq" id="XP_030104779.1">
    <property type="nucleotide sequence ID" value="XM_030248919.2"/>
</dbReference>
<dbReference type="RefSeq" id="XP_030104780.1">
    <property type="nucleotide sequence ID" value="XM_030248920.2"/>
</dbReference>
<dbReference type="RefSeq" id="XP_036015630.1">
    <property type="nucleotide sequence ID" value="XM_036159737.1"/>
</dbReference>
<dbReference type="SMR" id="Q920N2"/>
<dbReference type="BioGRID" id="226044">
    <property type="interactions" value="1"/>
</dbReference>
<dbReference type="FunCoup" id="Q920N2">
    <property type="interactions" value="2291"/>
</dbReference>
<dbReference type="STRING" id="10090.ENSMUSP00000130981"/>
<dbReference type="iPTMnet" id="Q920N2"/>
<dbReference type="PhosphoSitePlus" id="Q920N2"/>
<dbReference type="PaxDb" id="10090-ENSMUSP00000130981"/>
<dbReference type="ProteomicsDB" id="265457"/>
<dbReference type="Pumba" id="Q920N2"/>
<dbReference type="Antibodypedia" id="8381">
    <property type="antibodies" value="156 antibodies from 23 providers"/>
</dbReference>
<dbReference type="DNASU" id="110948"/>
<dbReference type="Ensembl" id="ENSMUST00000099512.3">
    <property type="protein sequence ID" value="ENSMUSP00000097112.3"/>
    <property type="gene ID" value="ENSMUSG00000040820.17"/>
</dbReference>
<dbReference type="Ensembl" id="ENSMUST00000163193.9">
    <property type="protein sequence ID" value="ENSMUSP00000130981.2"/>
    <property type="gene ID" value="ENSMUSG00000040820.17"/>
</dbReference>
<dbReference type="GeneID" id="110948"/>
<dbReference type="KEGG" id="mmu:110948"/>
<dbReference type="UCSC" id="uc008aag.1">
    <property type="organism name" value="mouse"/>
</dbReference>
<dbReference type="AGR" id="MGI:894646"/>
<dbReference type="CTD" id="3141"/>
<dbReference type="MGI" id="MGI:894646">
    <property type="gene designation" value="Hlcs"/>
</dbReference>
<dbReference type="VEuPathDB" id="HostDB:ENSMUSG00000040820"/>
<dbReference type="eggNOG" id="KOG1536">
    <property type="taxonomic scope" value="Eukaryota"/>
</dbReference>
<dbReference type="GeneTree" id="ENSGT00390000002960"/>
<dbReference type="HOGENOM" id="CLU_006150_2_0_1"/>
<dbReference type="InParanoid" id="Q920N2"/>
<dbReference type="OrthoDB" id="10250105at2759"/>
<dbReference type="PhylomeDB" id="Q920N2"/>
<dbReference type="TreeFam" id="TF105860"/>
<dbReference type="Reactome" id="R-MMU-196780">
    <property type="pathway name" value="Biotin transport and metabolism"/>
</dbReference>
<dbReference type="BioGRID-ORCS" id="110948">
    <property type="hits" value="11 hits in 86 CRISPR screens"/>
</dbReference>
<dbReference type="PRO" id="PR:Q920N2"/>
<dbReference type="Proteomes" id="UP000000589">
    <property type="component" value="Chromosome 16"/>
</dbReference>
<dbReference type="RNAct" id="Q920N2">
    <property type="molecule type" value="protein"/>
</dbReference>
<dbReference type="Bgee" id="ENSMUSG00000040820">
    <property type="expression patterns" value="Expressed in granulocyte and 179 other cell types or tissues"/>
</dbReference>
<dbReference type="ExpressionAtlas" id="Q920N2">
    <property type="expression patterns" value="baseline and differential"/>
</dbReference>
<dbReference type="GO" id="GO:0000785">
    <property type="term" value="C:chromatin"/>
    <property type="evidence" value="ECO:0000250"/>
    <property type="project" value="BHF-UCL"/>
</dbReference>
<dbReference type="GO" id="GO:0005737">
    <property type="term" value="C:cytoplasm"/>
    <property type="evidence" value="ECO:0000250"/>
    <property type="project" value="BHF-UCL"/>
</dbReference>
<dbReference type="GO" id="GO:0005829">
    <property type="term" value="C:cytosol"/>
    <property type="evidence" value="ECO:0000250"/>
    <property type="project" value="BHF-UCL"/>
</dbReference>
<dbReference type="GO" id="GO:0005739">
    <property type="term" value="C:mitochondrion"/>
    <property type="evidence" value="ECO:0007005"/>
    <property type="project" value="MGI"/>
</dbReference>
<dbReference type="GO" id="GO:0005652">
    <property type="term" value="C:nuclear lamina"/>
    <property type="evidence" value="ECO:0000250"/>
    <property type="project" value="BHF-UCL"/>
</dbReference>
<dbReference type="GO" id="GO:0016363">
    <property type="term" value="C:nuclear matrix"/>
    <property type="evidence" value="ECO:0000250"/>
    <property type="project" value="BHF-UCL"/>
</dbReference>
<dbReference type="GO" id="GO:0005524">
    <property type="term" value="F:ATP binding"/>
    <property type="evidence" value="ECO:0007669"/>
    <property type="project" value="UniProtKB-KW"/>
</dbReference>
<dbReference type="GO" id="GO:0009374">
    <property type="term" value="F:biotin binding"/>
    <property type="evidence" value="ECO:0000250"/>
    <property type="project" value="BHF-UCL"/>
</dbReference>
<dbReference type="GO" id="GO:0004077">
    <property type="term" value="F:biotin--[biotin carboxyl-carrier protein] ligase activity"/>
    <property type="evidence" value="ECO:0000315"/>
    <property type="project" value="MGI"/>
</dbReference>
<dbReference type="GO" id="GO:0019899">
    <property type="term" value="F:enzyme binding"/>
    <property type="evidence" value="ECO:0000250"/>
    <property type="project" value="BHF-UCL"/>
</dbReference>
<dbReference type="GO" id="GO:0042802">
    <property type="term" value="F:identical protein binding"/>
    <property type="evidence" value="ECO:0000250"/>
    <property type="project" value="BHF-UCL"/>
</dbReference>
<dbReference type="GO" id="GO:0006768">
    <property type="term" value="P:biotin metabolic process"/>
    <property type="evidence" value="ECO:0000315"/>
    <property type="project" value="MGI"/>
</dbReference>
<dbReference type="GO" id="GO:0036211">
    <property type="term" value="P:protein modification process"/>
    <property type="evidence" value="ECO:0007669"/>
    <property type="project" value="InterPro"/>
</dbReference>
<dbReference type="GO" id="GO:0070781">
    <property type="term" value="P:response to biotin"/>
    <property type="evidence" value="ECO:0000250"/>
    <property type="project" value="BHF-UCL"/>
</dbReference>
<dbReference type="CDD" id="cd16442">
    <property type="entry name" value="BPL"/>
    <property type="match status" value="1"/>
</dbReference>
<dbReference type="FunFam" id="3.30.930.10:FF:000073">
    <property type="entry name" value="Biotin--protein ligase"/>
    <property type="match status" value="1"/>
</dbReference>
<dbReference type="Gene3D" id="3.30.930.10">
    <property type="entry name" value="Bira Bifunctional Protein, Domain 2"/>
    <property type="match status" value="1"/>
</dbReference>
<dbReference type="InterPro" id="IPR045864">
    <property type="entry name" value="aa-tRNA-synth_II/BPL/LPL"/>
</dbReference>
<dbReference type="InterPro" id="IPR004408">
    <property type="entry name" value="Biotin_CoA_COase_ligase"/>
</dbReference>
<dbReference type="InterPro" id="IPR003142">
    <property type="entry name" value="BPL_C"/>
</dbReference>
<dbReference type="InterPro" id="IPR004143">
    <property type="entry name" value="BPL_LPL_catalytic"/>
</dbReference>
<dbReference type="NCBIfam" id="TIGR00121">
    <property type="entry name" value="birA_ligase"/>
    <property type="match status" value="1"/>
</dbReference>
<dbReference type="PANTHER" id="PTHR12835">
    <property type="entry name" value="BIOTIN PROTEIN LIGASE"/>
    <property type="match status" value="1"/>
</dbReference>
<dbReference type="PANTHER" id="PTHR12835:SF5">
    <property type="entry name" value="BIOTIN--PROTEIN LIGASE"/>
    <property type="match status" value="1"/>
</dbReference>
<dbReference type="Pfam" id="PF02237">
    <property type="entry name" value="BPL_C"/>
    <property type="match status" value="1"/>
</dbReference>
<dbReference type="Pfam" id="PF03099">
    <property type="entry name" value="BPL_LplA_LipB"/>
    <property type="match status" value="1"/>
</dbReference>
<dbReference type="SUPFAM" id="SSF55681">
    <property type="entry name" value="Class II aaRS and biotin synthetases"/>
    <property type="match status" value="1"/>
</dbReference>
<dbReference type="PROSITE" id="PS51733">
    <property type="entry name" value="BPL_LPL_CATALYTIC"/>
    <property type="match status" value="1"/>
</dbReference>
<name>BPL1_MOUSE</name>
<organism>
    <name type="scientific">Mus musculus</name>
    <name type="common">Mouse</name>
    <dbReference type="NCBI Taxonomy" id="10090"/>
    <lineage>
        <taxon>Eukaryota</taxon>
        <taxon>Metazoa</taxon>
        <taxon>Chordata</taxon>
        <taxon>Craniata</taxon>
        <taxon>Vertebrata</taxon>
        <taxon>Euteleostomi</taxon>
        <taxon>Mammalia</taxon>
        <taxon>Eutheria</taxon>
        <taxon>Euarchontoglires</taxon>
        <taxon>Glires</taxon>
        <taxon>Rodentia</taxon>
        <taxon>Myomorpha</taxon>
        <taxon>Muroidea</taxon>
        <taxon>Muridae</taxon>
        <taxon>Murinae</taxon>
        <taxon>Mus</taxon>
        <taxon>Mus</taxon>
    </lineage>
</organism>
<proteinExistence type="evidence at protein level"/>
<reference key="1">
    <citation type="submission" date="2001-07" db="EMBL/GenBank/DDBJ databases">
        <authorList>
            <person name="Hattori M."/>
            <person name="Ishii K."/>
            <person name="Toyoda A."/>
            <person name="Taylor T.D."/>
            <person name="Hong-Seog P."/>
            <person name="Fujiyama A."/>
            <person name="Yada T."/>
            <person name="Totoki Y."/>
            <person name="Watanabe H."/>
            <person name="Sakaki Y."/>
        </authorList>
    </citation>
    <scope>NUCLEOTIDE SEQUENCE [MRNA]</scope>
    <source>
        <strain>BALB/cJ</strain>
        <tissue>Testis</tissue>
    </source>
</reference>
<reference key="2">
    <citation type="journal article" date="2004" name="Genome Res.">
        <title>The status, quality, and expansion of the NIH full-length cDNA project: the Mammalian Gene Collection (MGC).</title>
        <authorList>
            <consortium name="The MGC Project Team"/>
        </authorList>
    </citation>
    <scope>NUCLEOTIDE SEQUENCE [LARGE SCALE MRNA]</scope>
    <source>
        <strain>C57BL/6J</strain>
        <tissue>Embryo</tissue>
    </source>
</reference>
<reference key="3">
    <citation type="journal article" date="2010" name="Cell">
        <title>A tissue-specific atlas of mouse protein phosphorylation and expression.</title>
        <authorList>
            <person name="Huttlin E.L."/>
            <person name="Jedrychowski M.P."/>
            <person name="Elias J.E."/>
            <person name="Goswami T."/>
            <person name="Rad R."/>
            <person name="Beausoleil S.A."/>
            <person name="Villen J."/>
            <person name="Haas W."/>
            <person name="Sowa M.E."/>
            <person name="Gygi S.P."/>
        </authorList>
    </citation>
    <scope>IDENTIFICATION BY MASS SPECTROMETRY [LARGE SCALE ANALYSIS]</scope>
    <source>
        <tissue>Brain</tissue>
        <tissue>Testis</tissue>
    </source>
</reference>
<protein>
    <recommendedName>
        <fullName>Biotin--protein ligase</fullName>
        <ecNumber evidence="1">6.3.4.-</ecNumber>
    </recommendedName>
    <alternativeName>
        <fullName>Biotin apo-protein ligase</fullName>
    </alternativeName>
    <domain>
        <recommendedName>
            <fullName>Biotin--[methylmalonyl-CoA-carboxytransferase] ligase</fullName>
            <ecNumber evidence="1">6.3.4.9</ecNumber>
        </recommendedName>
    </domain>
    <domain>
        <recommendedName>
            <fullName>Biotin--[propionyl-CoA-carboxylase [ATP-hydrolyzing]] ligase</fullName>
            <ecNumber evidence="1">6.3.4.10</ecNumber>
        </recommendedName>
        <alternativeName>
            <fullName>Holocarboxylase synthetase</fullName>
            <shortName>HCS</shortName>
        </alternativeName>
    </domain>
    <domain>
        <recommendedName>
            <fullName>Biotin--[methylcrotonoyl-CoA-carboxylase] ligase</fullName>
            <ecNumber evidence="1">6.3.4.11</ecNumber>
        </recommendedName>
    </domain>
    <domain>
        <recommendedName>
            <fullName>Biotin--[acetyl-CoA-carboxylase] ligase</fullName>
            <ecNumber evidence="1">6.3.4.15</ecNumber>
        </recommendedName>
    </domain>
</protein>